<evidence type="ECO:0000256" key="1">
    <source>
        <dbReference type="SAM" id="MobiDB-lite"/>
    </source>
</evidence>
<evidence type="ECO:0000269" key="2">
    <source>
    </source>
</evidence>
<evidence type="ECO:0000305" key="3"/>
<evidence type="ECO:0007744" key="4">
    <source>
    </source>
</evidence>
<evidence type="ECO:0007744" key="5">
    <source>
    </source>
</evidence>
<keyword id="KW-0007">Acetylation</keyword>
<keyword id="KW-0597">Phosphoprotein</keyword>
<keyword id="KW-1185">Reference proteome</keyword>
<accession>Q3E784</accession>
<accession>D3DM90</accession>
<dbReference type="EMBL" id="U18922">
    <property type="status" value="NOT_ANNOTATED_CDS"/>
    <property type="molecule type" value="Genomic_DNA"/>
</dbReference>
<dbReference type="EMBL" id="BK006939">
    <property type="protein sequence ID" value="DAA07844.1"/>
    <property type="molecule type" value="Genomic_DNA"/>
</dbReference>
<dbReference type="RefSeq" id="NP_796378.3">
    <property type="nucleotide sequence ID" value="NM_001184517.3"/>
</dbReference>
<dbReference type="SMR" id="Q3E784"/>
<dbReference type="BioGRID" id="36934">
    <property type="interactions" value="55"/>
</dbReference>
<dbReference type="FunCoup" id="Q3E784">
    <property type="interactions" value="9"/>
</dbReference>
<dbReference type="IntAct" id="Q3E784">
    <property type="interactions" value="4"/>
</dbReference>
<dbReference type="STRING" id="4932.YER180C-A"/>
<dbReference type="iPTMnet" id="Q3E784"/>
<dbReference type="PaxDb" id="4932-YER180C-A"/>
<dbReference type="PeptideAtlas" id="Q3E784"/>
<dbReference type="EnsemblFungi" id="YER180C-A_mRNA">
    <property type="protein sequence ID" value="YER180C-A"/>
    <property type="gene ID" value="YER180C-A"/>
</dbReference>
<dbReference type="GeneID" id="856928"/>
<dbReference type="KEGG" id="sce:YER180C-A"/>
<dbReference type="AGR" id="SGD:S000028437"/>
<dbReference type="SGD" id="S000028437">
    <property type="gene designation" value="SLO1"/>
</dbReference>
<dbReference type="VEuPathDB" id="FungiDB:YER180C-A"/>
<dbReference type="eggNOG" id="ENOG502S763">
    <property type="taxonomic scope" value="Eukaryota"/>
</dbReference>
<dbReference type="HOGENOM" id="CLU_193956_0_0_1"/>
<dbReference type="InParanoid" id="Q3E784"/>
<dbReference type="OMA" id="ESEEYHI"/>
<dbReference type="OrthoDB" id="2163284at2759"/>
<dbReference type="BioCyc" id="YEAST:G3O-30393-MONOMER"/>
<dbReference type="BioGRID-ORCS" id="856928">
    <property type="hits" value="4 hits in 10 CRISPR screens"/>
</dbReference>
<dbReference type="PRO" id="PR:Q3E784"/>
<dbReference type="Proteomes" id="UP000002311">
    <property type="component" value="Chromosome V"/>
</dbReference>
<dbReference type="RNAct" id="Q3E784">
    <property type="molecule type" value="protein"/>
</dbReference>
<dbReference type="GO" id="GO:0006886">
    <property type="term" value="P:intracellular protein transport"/>
    <property type="evidence" value="ECO:0000353"/>
    <property type="project" value="SGD"/>
</dbReference>
<dbReference type="Gene3D" id="1.20.5.170">
    <property type="match status" value="1"/>
</dbReference>
<dbReference type="InterPro" id="IPR019357">
    <property type="entry name" value="SCOC"/>
</dbReference>
<dbReference type="Pfam" id="PF10224">
    <property type="entry name" value="DUF2205"/>
    <property type="match status" value="1"/>
</dbReference>
<protein>
    <recommendedName>
        <fullName>SCOCO-like protein 1</fullName>
    </recommendedName>
</protein>
<feature type="initiator methionine" description="Removed" evidence="4 5">
    <location>
        <position position="1"/>
    </location>
</feature>
<feature type="chain" id="PRO_0000076321" description="SCOCO-like protein 1">
    <location>
        <begin position="2"/>
        <end position="85"/>
    </location>
</feature>
<feature type="region of interest" description="Disordered" evidence="1">
    <location>
        <begin position="1"/>
        <end position="34"/>
    </location>
</feature>
<feature type="compositionally biased region" description="Polar residues" evidence="1">
    <location>
        <begin position="1"/>
        <end position="20"/>
    </location>
</feature>
<feature type="compositionally biased region" description="Basic and acidic residues" evidence="1">
    <location>
        <begin position="22"/>
        <end position="34"/>
    </location>
</feature>
<feature type="modified residue" description="N-acetylserine" evidence="4 5">
    <location>
        <position position="2"/>
    </location>
</feature>
<feature type="modified residue" description="Phosphoserine" evidence="4">
    <location>
        <position position="10"/>
    </location>
</feature>
<feature type="mutagenesis site" description="Disrupts interaction with ARL3." evidence="2">
    <original>Y</original>
    <variation>A</variation>
    <location>
        <position position="72"/>
    </location>
</feature>
<proteinExistence type="evidence at protein level"/>
<gene>
    <name type="primary">SLO1</name>
    <name type="ordered locus">YER180C-A</name>
</gene>
<reference key="1">
    <citation type="journal article" date="1997" name="Nature">
        <title>The nucleotide sequence of Saccharomyces cerevisiae chromosome V.</title>
        <authorList>
            <person name="Dietrich F.S."/>
            <person name="Mulligan J.T."/>
            <person name="Hennessy K.M."/>
            <person name="Yelton M.A."/>
            <person name="Allen E."/>
            <person name="Araujo R."/>
            <person name="Aviles E."/>
            <person name="Berno A."/>
            <person name="Brennan T."/>
            <person name="Carpenter J."/>
            <person name="Chen E."/>
            <person name="Cherry J.M."/>
            <person name="Chung E."/>
            <person name="Duncan M."/>
            <person name="Guzman E."/>
            <person name="Hartzell G."/>
            <person name="Hunicke-Smith S."/>
            <person name="Hyman R.W."/>
            <person name="Kayser A."/>
            <person name="Komp C."/>
            <person name="Lashkari D."/>
            <person name="Lew H."/>
            <person name="Lin D."/>
            <person name="Mosedale D."/>
            <person name="Nakahara K."/>
            <person name="Namath A."/>
            <person name="Norgren R."/>
            <person name="Oefner P."/>
            <person name="Oh C."/>
            <person name="Petel F.X."/>
            <person name="Roberts D."/>
            <person name="Sehl P."/>
            <person name="Schramm S."/>
            <person name="Shogren T."/>
            <person name="Smith V."/>
            <person name="Taylor P."/>
            <person name="Wei Y."/>
            <person name="Botstein D."/>
            <person name="Davis R.W."/>
        </authorList>
    </citation>
    <scope>NUCLEOTIDE SEQUENCE [LARGE SCALE GENOMIC DNA]</scope>
    <source>
        <strain>ATCC 204508 / S288c</strain>
    </source>
</reference>
<reference key="2">
    <citation type="journal article" date="2014" name="G3 (Bethesda)">
        <title>The reference genome sequence of Saccharomyces cerevisiae: Then and now.</title>
        <authorList>
            <person name="Engel S.R."/>
            <person name="Dietrich F.S."/>
            <person name="Fisk D.G."/>
            <person name="Binkley G."/>
            <person name="Balakrishnan R."/>
            <person name="Costanzo M.C."/>
            <person name="Dwight S.S."/>
            <person name="Hitz B.C."/>
            <person name="Karra K."/>
            <person name="Nash R.S."/>
            <person name="Weng S."/>
            <person name="Wong E.D."/>
            <person name="Lloyd P."/>
            <person name="Skrzypek M.S."/>
            <person name="Miyasato S.R."/>
            <person name="Simison M."/>
            <person name="Cherry J.M."/>
        </authorList>
    </citation>
    <scope>GENOME REANNOTATION</scope>
    <source>
        <strain>ATCC 204508 / S288c</strain>
    </source>
</reference>
<reference key="3">
    <citation type="journal article" date="2003" name="Curr. Biol.">
        <title>The ARF-like GTPases Arl1p and Arl3p act in a pathway that interacts with vesicle-tethering factors at the Golgi apparatus.</title>
        <authorList>
            <person name="Panic B."/>
            <person name="Whyte J.R.C."/>
            <person name="Munro S."/>
        </authorList>
    </citation>
    <scope>INTERACTION WITH ARL3</scope>
    <scope>MUTAGENESIS OF TYR-72</scope>
</reference>
<reference key="4">
    <citation type="journal article" date="2005" name="Mol. Cell. Proteomics">
        <title>Quantitative phosphoproteomics applied to the yeast pheromone signaling pathway.</title>
        <authorList>
            <person name="Gruhler A."/>
            <person name="Olsen J.V."/>
            <person name="Mohammed S."/>
            <person name="Mortensen P."/>
            <person name="Faergeman N.J."/>
            <person name="Mann M."/>
            <person name="Jensen O.N."/>
        </authorList>
    </citation>
    <scope>ACETYLATION [LARGE SCALE ANALYSIS] AT SER-2</scope>
    <scope>PHOSPHORYLATION [LARGE SCALE ANALYSIS] AT SER-10</scope>
    <scope>CLEAVAGE OF INITIATOR METHIONINE [LARGE SCALE ANALYSIS]</scope>
    <scope>IDENTIFICATION BY MASS SPECTROMETRY [LARGE SCALE ANALYSIS]</scope>
    <source>
        <strain>YAL6B</strain>
    </source>
</reference>
<reference key="5">
    <citation type="journal article" date="2012" name="Proc. Natl. Acad. Sci. U.S.A.">
        <title>N-terminal acetylome analyses and functional insights of the N-terminal acetyltransferase NatB.</title>
        <authorList>
            <person name="Van Damme P."/>
            <person name="Lasa M."/>
            <person name="Polevoda B."/>
            <person name="Gazquez C."/>
            <person name="Elosegui-Artola A."/>
            <person name="Kim D.S."/>
            <person name="De Juan-Pardo E."/>
            <person name="Demeyer K."/>
            <person name="Hole K."/>
            <person name="Larrea E."/>
            <person name="Timmerman E."/>
            <person name="Prieto J."/>
            <person name="Arnesen T."/>
            <person name="Sherman F."/>
            <person name="Gevaert K."/>
            <person name="Aldabe R."/>
        </authorList>
    </citation>
    <scope>ACETYLATION [LARGE SCALE ANALYSIS] AT SER-2</scope>
    <scope>CLEAVAGE OF INITIATOR METHIONINE [LARGE SCALE ANALYSIS]</scope>
    <scope>IDENTIFICATION BY MASS SPECTROMETRY [LARGE SCALE ANALYSIS]</scope>
</reference>
<organism>
    <name type="scientific">Saccharomyces cerevisiae (strain ATCC 204508 / S288c)</name>
    <name type="common">Baker's yeast</name>
    <dbReference type="NCBI Taxonomy" id="559292"/>
    <lineage>
        <taxon>Eukaryota</taxon>
        <taxon>Fungi</taxon>
        <taxon>Dikarya</taxon>
        <taxon>Ascomycota</taxon>
        <taxon>Saccharomycotina</taxon>
        <taxon>Saccharomycetes</taxon>
        <taxon>Saccharomycetales</taxon>
        <taxon>Saccharomycetaceae</taxon>
        <taxon>Saccharomyces</taxon>
    </lineage>
</organism>
<comment type="subunit">
    <text evidence="2">Interacts with ARL3.</text>
</comment>
<comment type="similarity">
    <text evidence="3">Belongs to the SLO1 family.</text>
</comment>
<sequence>MSAENISTGSPTGKQPSSEVNLGEREAGTKNERMMRQTKLLKDTLDLLWNKTLEQQEVCEQLKQENDYLEDYIGNLMRSSNVLEK</sequence>
<name>SLO1_YEAST</name>